<keyword id="KW-0028">Amino-acid biosynthesis</keyword>
<keyword id="KW-0963">Cytoplasm</keyword>
<keyword id="KW-0456">Lyase</keyword>
<keyword id="KW-0486">Methionine biosynthesis</keyword>
<keyword id="KW-0663">Pyridoxal phosphate</keyword>
<keyword id="KW-1185">Reference proteome</keyword>
<evidence type="ECO:0000250" key="1">
    <source>
        <dbReference type="UniProtKB" id="P06721"/>
    </source>
</evidence>
<evidence type="ECO:0000305" key="2"/>
<name>METC_HAEIN</name>
<gene>
    <name type="primary">metC</name>
    <name type="ordered locus">HI_0122</name>
</gene>
<dbReference type="EC" id="4.4.1.13" evidence="1"/>
<dbReference type="EMBL" id="L42023">
    <property type="protein sequence ID" value="AAC21796.1"/>
    <property type="molecule type" value="Genomic_DNA"/>
</dbReference>
<dbReference type="PIR" id="E64049">
    <property type="entry name" value="E64049"/>
</dbReference>
<dbReference type="RefSeq" id="NP_438294.1">
    <property type="nucleotide sequence ID" value="NC_000907.1"/>
</dbReference>
<dbReference type="SMR" id="P44527"/>
<dbReference type="STRING" id="71421.HI_0122"/>
<dbReference type="EnsemblBacteria" id="AAC21796">
    <property type="protein sequence ID" value="AAC21796"/>
    <property type="gene ID" value="HI_0122"/>
</dbReference>
<dbReference type="KEGG" id="hin:HI_0122"/>
<dbReference type="PATRIC" id="fig|71421.8.peg.126"/>
<dbReference type="eggNOG" id="COG0626">
    <property type="taxonomic scope" value="Bacteria"/>
</dbReference>
<dbReference type="HOGENOM" id="CLU_018986_5_1_6"/>
<dbReference type="OrthoDB" id="9805807at2"/>
<dbReference type="PhylomeDB" id="P44527"/>
<dbReference type="BioCyc" id="HINF71421:G1GJ1-132-MONOMER"/>
<dbReference type="UniPathway" id="UPA00051">
    <property type="reaction ID" value="UER00078"/>
</dbReference>
<dbReference type="Proteomes" id="UP000000579">
    <property type="component" value="Chromosome"/>
</dbReference>
<dbReference type="GO" id="GO:0005737">
    <property type="term" value="C:cytoplasm"/>
    <property type="evidence" value="ECO:0007669"/>
    <property type="project" value="UniProtKB-SubCell"/>
</dbReference>
<dbReference type="GO" id="GO:0047804">
    <property type="term" value="F:cysteine-S-conjugate beta-lyase activity"/>
    <property type="evidence" value="ECO:0000318"/>
    <property type="project" value="GO_Central"/>
</dbReference>
<dbReference type="GO" id="GO:0030170">
    <property type="term" value="F:pyridoxal phosphate binding"/>
    <property type="evidence" value="ECO:0007669"/>
    <property type="project" value="InterPro"/>
</dbReference>
<dbReference type="GO" id="GO:0019450">
    <property type="term" value="P:L-cysteine catabolic process to pyruvate"/>
    <property type="evidence" value="ECO:0000318"/>
    <property type="project" value="GO_Central"/>
</dbReference>
<dbReference type="GO" id="GO:0009086">
    <property type="term" value="P:methionine biosynthetic process"/>
    <property type="evidence" value="ECO:0007669"/>
    <property type="project" value="UniProtKB-KW"/>
</dbReference>
<dbReference type="GO" id="GO:0019346">
    <property type="term" value="P:transsulfuration"/>
    <property type="evidence" value="ECO:0007669"/>
    <property type="project" value="InterPro"/>
</dbReference>
<dbReference type="CDD" id="cd00614">
    <property type="entry name" value="CGS_like"/>
    <property type="match status" value="1"/>
</dbReference>
<dbReference type="FunFam" id="3.40.640.10:FF:000062">
    <property type="entry name" value="Cystathionine beta-lyase"/>
    <property type="match status" value="1"/>
</dbReference>
<dbReference type="FunFam" id="3.90.1150.10:FF:000058">
    <property type="entry name" value="Cystathionine beta-lyase"/>
    <property type="match status" value="1"/>
</dbReference>
<dbReference type="Gene3D" id="3.90.1150.10">
    <property type="entry name" value="Aspartate Aminotransferase, domain 1"/>
    <property type="match status" value="1"/>
</dbReference>
<dbReference type="Gene3D" id="3.40.640.10">
    <property type="entry name" value="Type I PLP-dependent aspartate aminotransferase-like (Major domain)"/>
    <property type="match status" value="1"/>
</dbReference>
<dbReference type="InterPro" id="IPR000277">
    <property type="entry name" value="Cys/Met-Metab_PyrdxlP-dep_enz"/>
</dbReference>
<dbReference type="InterPro" id="IPR006233">
    <property type="entry name" value="Cys_b_lyase_bac"/>
</dbReference>
<dbReference type="InterPro" id="IPR054542">
    <property type="entry name" value="Cys_met_metab_PP"/>
</dbReference>
<dbReference type="InterPro" id="IPR015424">
    <property type="entry name" value="PyrdxlP-dep_Trfase"/>
</dbReference>
<dbReference type="InterPro" id="IPR015421">
    <property type="entry name" value="PyrdxlP-dep_Trfase_major"/>
</dbReference>
<dbReference type="InterPro" id="IPR015422">
    <property type="entry name" value="PyrdxlP-dep_Trfase_small"/>
</dbReference>
<dbReference type="NCBIfam" id="TIGR01324">
    <property type="entry name" value="cysta_beta_ly_B"/>
    <property type="match status" value="1"/>
</dbReference>
<dbReference type="NCBIfam" id="NF005990">
    <property type="entry name" value="PRK08114.1"/>
    <property type="match status" value="1"/>
</dbReference>
<dbReference type="PANTHER" id="PTHR43500">
    <property type="entry name" value="CYSTATHIONINE BETA-LYASE-RELATED"/>
    <property type="match status" value="1"/>
</dbReference>
<dbReference type="PANTHER" id="PTHR43500:SF1">
    <property type="entry name" value="CYSTATHIONINE BETA-LYASE-RELATED"/>
    <property type="match status" value="1"/>
</dbReference>
<dbReference type="Pfam" id="PF01053">
    <property type="entry name" value="Cys_Met_Meta_PP"/>
    <property type="match status" value="1"/>
</dbReference>
<dbReference type="PIRSF" id="PIRSF001434">
    <property type="entry name" value="CGS"/>
    <property type="match status" value="1"/>
</dbReference>
<dbReference type="SUPFAM" id="SSF53383">
    <property type="entry name" value="PLP-dependent transferases"/>
    <property type="match status" value="1"/>
</dbReference>
<dbReference type="PROSITE" id="PS00868">
    <property type="entry name" value="CYS_MET_METAB_PP"/>
    <property type="match status" value="1"/>
</dbReference>
<proteinExistence type="inferred from homology"/>
<sequence length="396" mass="44345">MQTKYDLSTMFIHSGRQKRFSQGSVNPVLQRASSLLFDSIEDKKHATQRRAKGELFYGRRGTLTHFALQDLMCEMEGGAGCYLYPCGTAAVTNSILSFVKTGDHVLMSGAAYEPTQYFCNIVLKKMQIDITYYDPLIGEDIATLIQPNTKVLFLEAPSSITMEIPDIPTIVKAARKVNPNIVIMIDNTWSAGVLFKALEHDIDISIQAGTKYLVGHSDIMIGTAVANARTWDQLREHSYLMGQMVDADSAYTTARGIRTLGVRLKQHQESSIKVAKWLSEQPEVKTVYHPALPSCPGHEFFLRDFSGSSGLFSFELTQRLTSEQVSKFMDHFQLFAMAYSWGGFESLILCNQPEEIAHIRPNIKRNLTGSLIRVHIGFENVDELIADLKAGFERIA</sequence>
<feature type="chain" id="PRO_0000114770" description="Cystathionine beta-lyase">
    <location>
        <begin position="1"/>
        <end position="396"/>
    </location>
</feature>
<feature type="modified residue" description="N6-(pyridoxal phosphate)lysine" evidence="1">
    <location>
        <position position="211"/>
    </location>
</feature>
<comment type="function">
    <text evidence="1">Catalyzes the cleavage of cystathionine to homocysteine, pyruvate and ammonia during methionine biosynthesis.</text>
</comment>
<comment type="catalytic activity">
    <reaction evidence="1">
        <text>L,L-cystathionine + H2O = L-homocysteine + pyruvate + NH4(+)</text>
        <dbReference type="Rhea" id="RHEA:13965"/>
        <dbReference type="ChEBI" id="CHEBI:15361"/>
        <dbReference type="ChEBI" id="CHEBI:15377"/>
        <dbReference type="ChEBI" id="CHEBI:28938"/>
        <dbReference type="ChEBI" id="CHEBI:58161"/>
        <dbReference type="ChEBI" id="CHEBI:58199"/>
    </reaction>
</comment>
<comment type="catalytic activity">
    <reaction evidence="1">
        <text>an S-substituted L-cysteine + H2O = a thiol + pyruvate + NH4(+)</text>
        <dbReference type="Rhea" id="RHEA:18121"/>
        <dbReference type="ChEBI" id="CHEBI:15361"/>
        <dbReference type="ChEBI" id="CHEBI:15377"/>
        <dbReference type="ChEBI" id="CHEBI:28938"/>
        <dbReference type="ChEBI" id="CHEBI:29256"/>
        <dbReference type="ChEBI" id="CHEBI:58717"/>
        <dbReference type="EC" id="4.4.1.13"/>
    </reaction>
</comment>
<comment type="cofactor">
    <cofactor evidence="1">
        <name>pyridoxal 5'-phosphate</name>
        <dbReference type="ChEBI" id="CHEBI:597326"/>
    </cofactor>
</comment>
<comment type="pathway">
    <text evidence="1">Amino-acid biosynthesis; L-methionine biosynthesis via de novo pathway; L-homocysteine from L-cystathionine: step 1/1.</text>
</comment>
<comment type="subunit">
    <text evidence="1">Homotetramer.</text>
</comment>
<comment type="subcellular location">
    <subcellularLocation>
        <location evidence="1">Cytoplasm</location>
    </subcellularLocation>
</comment>
<comment type="similarity">
    <text evidence="2">Belongs to the trans-sulfuration enzymes family.</text>
</comment>
<accession>P44527</accession>
<protein>
    <recommendedName>
        <fullName>Cystathionine beta-lyase</fullName>
        <shortName>CBL</shortName>
        <ecNumber evidence="1">4.4.1.13</ecNumber>
    </recommendedName>
    <alternativeName>
        <fullName>Beta-cystathionase</fullName>
    </alternativeName>
    <alternativeName>
        <fullName>Cysteine lyase</fullName>
    </alternativeName>
    <alternativeName>
        <fullName>Cysteine-S-conjugate beta-lyase</fullName>
    </alternativeName>
</protein>
<organism>
    <name type="scientific">Haemophilus influenzae (strain ATCC 51907 / DSM 11121 / KW20 / Rd)</name>
    <dbReference type="NCBI Taxonomy" id="71421"/>
    <lineage>
        <taxon>Bacteria</taxon>
        <taxon>Pseudomonadati</taxon>
        <taxon>Pseudomonadota</taxon>
        <taxon>Gammaproteobacteria</taxon>
        <taxon>Pasteurellales</taxon>
        <taxon>Pasteurellaceae</taxon>
        <taxon>Haemophilus</taxon>
    </lineage>
</organism>
<reference key="1">
    <citation type="journal article" date="1995" name="Science">
        <title>Whole-genome random sequencing and assembly of Haemophilus influenzae Rd.</title>
        <authorList>
            <person name="Fleischmann R.D."/>
            <person name="Adams M.D."/>
            <person name="White O."/>
            <person name="Clayton R.A."/>
            <person name="Kirkness E.F."/>
            <person name="Kerlavage A.R."/>
            <person name="Bult C.J."/>
            <person name="Tomb J.-F."/>
            <person name="Dougherty B.A."/>
            <person name="Merrick J.M."/>
            <person name="McKenney K."/>
            <person name="Sutton G.G."/>
            <person name="FitzHugh W."/>
            <person name="Fields C.A."/>
            <person name="Gocayne J.D."/>
            <person name="Scott J.D."/>
            <person name="Shirley R."/>
            <person name="Liu L.-I."/>
            <person name="Glodek A."/>
            <person name="Kelley J.M."/>
            <person name="Weidman J.F."/>
            <person name="Phillips C.A."/>
            <person name="Spriggs T."/>
            <person name="Hedblom E."/>
            <person name="Cotton M.D."/>
            <person name="Utterback T.R."/>
            <person name="Hanna M.C."/>
            <person name="Nguyen D.T."/>
            <person name="Saudek D.M."/>
            <person name="Brandon R.C."/>
            <person name="Fine L.D."/>
            <person name="Fritchman J.L."/>
            <person name="Fuhrmann J.L."/>
            <person name="Geoghagen N.S.M."/>
            <person name="Gnehm C.L."/>
            <person name="McDonald L.A."/>
            <person name="Small K.V."/>
            <person name="Fraser C.M."/>
            <person name="Smith H.O."/>
            <person name="Venter J.C."/>
        </authorList>
    </citation>
    <scope>NUCLEOTIDE SEQUENCE [LARGE SCALE GENOMIC DNA]</scope>
    <source>
        <strain>ATCC 51907 / DSM 11121 / KW20 / Rd</strain>
    </source>
</reference>